<keyword id="KW-0002">3D-structure</keyword>
<keyword id="KW-0167">Capsid protein</keyword>
<keyword id="KW-1185">Reference proteome</keyword>
<keyword id="KW-0688">Ribosomal frameshifting</keyword>
<keyword id="KW-0946">Virion</keyword>
<feature type="chain" id="PRO_0000106522" description="Major capsid protein">
    <location>
        <begin position="1"/>
        <end position="345"/>
    </location>
</feature>
<feature type="region of interest" description="Intercapsomeric interactions" evidence="6">
    <location>
        <begin position="11"/>
        <end position="25"/>
    </location>
</feature>
<feature type="region of interest" description="Intercapsomeric interactions" evidence="6">
    <location>
        <begin position="152"/>
        <end position="156"/>
    </location>
</feature>
<feature type="strand" evidence="11">
    <location>
        <begin position="10"/>
        <end position="12"/>
    </location>
</feature>
<feature type="turn" evidence="11">
    <location>
        <begin position="47"/>
        <end position="49"/>
    </location>
</feature>
<feature type="strand" evidence="11">
    <location>
        <begin position="52"/>
        <end position="54"/>
    </location>
</feature>
<feature type="strand" evidence="11">
    <location>
        <begin position="59"/>
        <end position="66"/>
    </location>
</feature>
<feature type="strand" evidence="11">
    <location>
        <begin position="89"/>
        <end position="95"/>
    </location>
</feature>
<feature type="strand" evidence="11">
    <location>
        <begin position="98"/>
        <end position="107"/>
    </location>
</feature>
<feature type="helix" evidence="11">
    <location>
        <begin position="108"/>
        <end position="112"/>
    </location>
</feature>
<feature type="helix" evidence="11">
    <location>
        <begin position="118"/>
        <end position="147"/>
    </location>
</feature>
<feature type="turn" evidence="11">
    <location>
        <begin position="155"/>
        <end position="158"/>
    </location>
</feature>
<feature type="helix" evidence="11">
    <location>
        <begin position="171"/>
        <end position="173"/>
    </location>
</feature>
<feature type="helix" evidence="11">
    <location>
        <begin position="178"/>
        <end position="196"/>
    </location>
</feature>
<feature type="strand" evidence="11">
    <location>
        <begin position="206"/>
        <end position="209"/>
    </location>
</feature>
<feature type="helix" evidence="11">
    <location>
        <begin position="211"/>
        <end position="220"/>
    </location>
</feature>
<feature type="strand" evidence="11">
    <location>
        <begin position="221"/>
        <end position="223"/>
    </location>
</feature>
<feature type="turn" evidence="11">
    <location>
        <begin position="234"/>
        <end position="236"/>
    </location>
</feature>
<feature type="strand" evidence="11">
    <location>
        <begin position="245"/>
        <end position="249"/>
    </location>
</feature>
<feature type="strand" evidence="11">
    <location>
        <begin position="260"/>
        <end position="266"/>
    </location>
</feature>
<feature type="strand" evidence="11">
    <location>
        <begin position="285"/>
        <end position="287"/>
    </location>
</feature>
<feature type="strand" evidence="11">
    <location>
        <begin position="290"/>
        <end position="293"/>
    </location>
</feature>
<feature type="strand" evidence="11">
    <location>
        <begin position="295"/>
        <end position="313"/>
    </location>
</feature>
<feature type="turn" evidence="11">
    <location>
        <begin position="314"/>
        <end position="317"/>
    </location>
</feature>
<feature type="strand" evidence="11">
    <location>
        <begin position="318"/>
        <end position="330"/>
    </location>
</feature>
<feature type="strand" evidence="11">
    <location>
        <begin position="338"/>
        <end position="341"/>
    </location>
</feature>
<reference key="1">
    <citation type="journal article" date="1983" name="J. Mol. Biol.">
        <title>Complete nucleotide sequence of bacteriophage T7 DNA and the locations of T7 genetic elements.</title>
        <authorList>
            <person name="Dunn J.J."/>
            <person name="Studier F.W."/>
        </authorList>
    </citation>
    <scope>NUCLEOTIDE SEQUENCE [LARGE SCALE GENOMIC DNA]</scope>
</reference>
<reference key="2">
    <citation type="journal article" date="1991" name="J. Bacteriol.">
        <title>Frameshifting in gene 10 of bacteriophage T7.</title>
        <authorList>
            <person name="Condron B.G."/>
            <person name="Atkins J.F."/>
            <person name="Gesteland R.F."/>
        </authorList>
    </citation>
    <scope>RIBOSOMAL FRAMESHIFT</scope>
</reference>
<reference key="3">
    <citation type="journal article" date="2013" name="Proc. Natl. Acad. Sci. U.S.A.">
        <title>Visualization of uncorrelated, tandem symmetry mismatches in the internal genome packaging apparatus of bacteriophage T7.</title>
        <authorList>
            <person name="Guo F."/>
            <person name="Liu Z."/>
            <person name="Vago F."/>
            <person name="Ren Y."/>
            <person name="Wu W."/>
            <person name="Wright E.T."/>
            <person name="Serwer P."/>
            <person name="Jiang W."/>
        </authorList>
    </citation>
    <scope>INTERACTION WITH THE CONNECTOR PROTEIN</scope>
</reference>
<reference key="4">
    <citation type="journal article" date="2013" name="J. Biol. Chem.">
        <title>Structural characterization of the bacteriophage T7 tail machinery.</title>
        <authorList>
            <person name="Cuervo A."/>
            <person name="Pulido-Cid M."/>
            <person name="Chagoyen M."/>
            <person name="Arranz R."/>
            <person name="Gonzalez-Garcia V.A."/>
            <person name="Garcia-Doval C."/>
            <person name="Caston J.R."/>
            <person name="Valpuesta J.M."/>
            <person name="van Raaij M.J."/>
            <person name="Martin-Benito J."/>
            <person name="Carrascosa J.L."/>
        </authorList>
    </citation>
    <scope>SUBCELLULAR LOCATION</scope>
</reference>
<reference key="5">
    <citation type="journal article" date="2011" name="J. Biol. Chem.">
        <title>Molecular rearrangements involved in the capsid shell maturation of bacteriophage T7.</title>
        <authorList>
            <person name="Ionel A."/>
            <person name="Velazquez-Muriel J.A."/>
            <person name="Luque D."/>
            <person name="Cuervo A."/>
            <person name="Caston J.R."/>
            <person name="Valpuesta J.M."/>
            <person name="Martin-Benito J."/>
            <person name="Carrascosa J.L."/>
        </authorList>
    </citation>
    <scope>STRUCTURE BY ELECTRON MICROSCOPY (10.8 ANGSTROMS)</scope>
    <scope>INTERACTION WITH THE MINOR CAPSID PROTEIN</scope>
    <scope>FUNCTION</scope>
</reference>
<reference evidence="8 9 10" key="6">
    <citation type="journal article" date="2014" name="Proc. Natl. Acad. Sci. U.S.A.">
        <title>Capsid expansion mechanism of bacteriophage T7 revealed by multistate atomic models derived from cryo-EM reconstructions.</title>
        <authorList>
            <person name="Guo F."/>
            <person name="Liu Z."/>
            <person name="Fang P.A."/>
            <person name="Zhang Q."/>
            <person name="Wright E.T."/>
            <person name="Wu W."/>
            <person name="Zhang C."/>
            <person name="Vago F."/>
            <person name="Ren Y."/>
            <person name="Jakana J."/>
            <person name="Chiu W."/>
            <person name="Serwer P."/>
            <person name="Jiang W."/>
        </authorList>
    </citation>
    <scope>STRUCTURE BY ELECTRON MICROSCOPY (3.50 ANGSTROMS)</scope>
    <scope>INTERACTION WITH THE CAPSID ASSEMBLY SCAFFOLDING PROTEIN</scope>
    <scope>SUBUNIT</scope>
    <scope>DOMAIN</scope>
</reference>
<gene>
    <name type="ordered locus">10</name>
</gene>
<evidence type="ECO:0000255" key="1">
    <source>
        <dbReference type="HAMAP-Rule" id="MF_04119"/>
    </source>
</evidence>
<evidence type="ECO:0000269" key="2">
    <source>
    </source>
</evidence>
<evidence type="ECO:0000269" key="3">
    <source>
    </source>
</evidence>
<evidence type="ECO:0000269" key="4">
    <source>
    </source>
</evidence>
<evidence type="ECO:0000269" key="5">
    <source>
    </source>
</evidence>
<evidence type="ECO:0000269" key="6">
    <source>
    </source>
</evidence>
<evidence type="ECO:0000303" key="7">
    <source>
    </source>
</evidence>
<evidence type="ECO:0007744" key="8">
    <source>
        <dbReference type="PDB" id="3J7V"/>
    </source>
</evidence>
<evidence type="ECO:0007744" key="9">
    <source>
        <dbReference type="PDB" id="3J7W"/>
    </source>
</evidence>
<evidence type="ECO:0007744" key="10">
    <source>
        <dbReference type="PDB" id="3J7X"/>
    </source>
</evidence>
<evidence type="ECO:0007829" key="11">
    <source>
        <dbReference type="PDB" id="3J7W"/>
    </source>
</evidence>
<dbReference type="EMBL" id="V01146">
    <property type="protein sequence ID" value="CAA24427.1"/>
    <property type="molecule type" value="Genomic_DNA"/>
</dbReference>
<dbReference type="PIR" id="A04344">
    <property type="entry name" value="VABPA7"/>
</dbReference>
<dbReference type="RefSeq" id="NP_041998.1">
    <molecule id="P19726-1"/>
    <property type="nucleotide sequence ID" value="NC_001604.1"/>
</dbReference>
<dbReference type="PDB" id="2XVR">
    <property type="method" value="EM"/>
    <property type="resolution" value="10.80 A"/>
    <property type="chains" value="A/B/C/D/E/F/G=1-345"/>
</dbReference>
<dbReference type="PDB" id="3IZG">
    <property type="method" value="EM"/>
    <property type="chains" value="A/B/C/D/E/F/G=1-345"/>
</dbReference>
<dbReference type="PDB" id="3J7V">
    <property type="method" value="EM"/>
    <property type="resolution" value="4.50 A"/>
    <property type="chains" value="A/B/C/D/E/F/G=1-345"/>
</dbReference>
<dbReference type="PDB" id="3J7W">
    <property type="method" value="EM"/>
    <property type="resolution" value="3.50 A"/>
    <property type="chains" value="A/B/C/D/E/F/G=1-345"/>
</dbReference>
<dbReference type="PDB" id="3J7X">
    <property type="method" value="EM"/>
    <property type="resolution" value="3.80 A"/>
    <property type="chains" value="A/B/C/D/E/F/G=1-345"/>
</dbReference>
<dbReference type="PDBsum" id="2XVR"/>
<dbReference type="PDBsum" id="3IZG"/>
<dbReference type="PDBsum" id="3J7V"/>
<dbReference type="PDBsum" id="3J7W"/>
<dbReference type="PDBsum" id="3J7X"/>
<dbReference type="EMDB" id="EMD-5566"/>
<dbReference type="EMDB" id="EMD-5567"/>
<dbReference type="EMDB" id="EMD-5568"/>
<dbReference type="EMDB" id="EMD-5569"/>
<dbReference type="EMDB" id="EMD-5570"/>
<dbReference type="EMDB" id="EMD-5571"/>
<dbReference type="EMDB" id="EMD-5572"/>
<dbReference type="EMDB" id="EMD-5573"/>
<dbReference type="SMR" id="P19726"/>
<dbReference type="DIP" id="DIP-29317N"/>
<dbReference type="IntAct" id="P19726">
    <property type="interactions" value="1"/>
</dbReference>
<dbReference type="MINT" id="P19726"/>
<dbReference type="KEGG" id="vg:1261026"/>
<dbReference type="OrthoDB" id="4979at10239"/>
<dbReference type="EvolutionaryTrace" id="P19726"/>
<dbReference type="Proteomes" id="UP000000840">
    <property type="component" value="Genome"/>
</dbReference>
<dbReference type="GO" id="GO:0019028">
    <property type="term" value="C:viral capsid"/>
    <property type="evidence" value="ECO:0007669"/>
    <property type="project" value="UniProtKB-UniRule"/>
</dbReference>
<dbReference type="GO" id="GO:0042802">
    <property type="term" value="F:identical protein binding"/>
    <property type="evidence" value="ECO:0000353"/>
    <property type="project" value="IntAct"/>
</dbReference>
<dbReference type="GO" id="GO:0075523">
    <property type="term" value="P:viral translational frameshifting"/>
    <property type="evidence" value="ECO:0007669"/>
    <property type="project" value="UniProtKB-KW"/>
</dbReference>
<dbReference type="HAMAP" id="MF_04119">
    <property type="entry name" value="CAPSID_PROTEIN_T7"/>
    <property type="match status" value="1"/>
</dbReference>
<dbReference type="InterPro" id="IPR049301">
    <property type="entry name" value="Capsid_Gp10A/Gp10B-like_dom"/>
</dbReference>
<dbReference type="InterPro" id="IPR039009">
    <property type="entry name" value="Capsid_Gp10A/Gp10B_dom"/>
</dbReference>
<dbReference type="Pfam" id="PF21703">
    <property type="entry name" value="Gp10A-like"/>
    <property type="match status" value="1"/>
</dbReference>
<comment type="function">
    <text evidence="3">Assembles with the minor capsid protein to form an icosahedral capsid with a T=7 symmetry, about 60 nm in diameter, and consisting of 415 capsid proteins. The major and minor capsid proteins are incorporated into the capsid in about a 90/10 ratio respectively. Once the capsid is formed, encapsidates one single copy of the viral genome.</text>
</comment>
<comment type="subunit">
    <text evidence="1 3 4 6">Homohexamer (PubMed:25313071). Interacts with the connector protein and the minor capsid protein (PubMed:20962334, PubMed:23580619). Interacts with the capsid assembly scaffolding protein; capsid proteins and scaffolding proteins form building blocks that assemble to form the procapsid, each hexamer of the major capsid protein interacting with 2 scaffolding proteins (PubMed:25313071).</text>
</comment>
<comment type="interaction">
    <interactant intactId="EBI-8665048">
        <id>P19726</id>
    </interactant>
    <interactant intactId="EBI-8665048">
        <id>P19726</id>
        <label>10</label>
    </interactant>
    <organismsDiffer>false</organismsDiffer>
    <experiments>2</experiments>
</comment>
<comment type="subcellular location">
    <subcellularLocation>
        <location evidence="1 3 5">Virion</location>
    </subcellularLocation>
</comment>
<comment type="alternative products">
    <event type="ribosomal frameshifting"/>
    <isoform>
        <id>P19726-1</id>
        <name>VC10A</name>
        <name>Major capsid protein 10A</name>
        <sequence type="displayed"/>
    </isoform>
    <isoform>
        <id>P19727-1</id>
        <name>VC10B</name>
        <name>Minor capsid protein 10B</name>
        <sequence type="external"/>
    </isoform>
</comment>
<comment type="domain">
    <text evidence="1 6">The N-terminus interacts with an internal region of the major capsid protein subunit in an adjacent capsomere (intercapsomeric interactions) to stabilize the capsid.</text>
</comment>
<comment type="miscellaneous">
    <molecule>Isoform VC10A</molecule>
    <text evidence="2">Produced by conventional translation.</text>
</comment>
<comment type="similarity">
    <text evidence="1">Belongs to the T7virus major capsid protein family.</text>
</comment>
<protein>
    <recommendedName>
        <fullName evidence="1 7">Major capsid protein</fullName>
    </recommendedName>
    <alternativeName>
        <fullName evidence="7">Gene product 10A</fullName>
        <shortName evidence="7">Gp10A</shortName>
    </alternativeName>
    <alternativeName>
        <fullName evidence="1">Major head protein</fullName>
    </alternativeName>
</protein>
<sequence length="345" mass="36546">MASMTGGQQMGTNQGKGVVAAGDKLALFLKVFGGEVLTAFARTSVTTSRHMVRSISSGKSAQFPVLGRTQAAYLAPGENLDDKRKDIKHTEKVITIDGLLTADVLIYDIEDAMNHYDVRSEYTSQLGESLAMAADGAVLAEIAGLCNVESKYNENIEGLGTATVIETTQNKAALTDQVALGKEIIAALTKARAALTKNYVPAADRVFYCDPDSYSAILAALMPNAANYAALIDPEKGSIRNVMGFEVVEVPHLTAGGAGTAREGTTGQKHVFPANKGEGNVKVAKDNVIGLFMHRSAVGTVKLRDLALERARRANFQADQIIAKYAMGHGGLRPEAAGAVVFKVE</sequence>
<name>CAPSA_BPT7</name>
<proteinExistence type="evidence at protein level"/>
<accession>P19726</accession>
<accession>P03717</accession>
<organismHost>
    <name type="scientific">Escherichia coli</name>
    <dbReference type="NCBI Taxonomy" id="562"/>
</organismHost>
<organism>
    <name type="scientific">Escherichia phage T7</name>
    <name type="common">Bacteriophage T7</name>
    <dbReference type="NCBI Taxonomy" id="10760"/>
    <lineage>
        <taxon>Viruses</taxon>
        <taxon>Duplodnaviria</taxon>
        <taxon>Heunggongvirae</taxon>
        <taxon>Uroviricota</taxon>
        <taxon>Caudoviricetes</taxon>
        <taxon>Autographiviridae</taxon>
        <taxon>Studiervirinae</taxon>
        <taxon>Teseptimavirus</taxon>
        <taxon>Teseptimavirus T7</taxon>
    </lineage>
</organism>